<feature type="chain" id="PRO_1000017434" description="Large ribosomal subunit protein bL27">
    <location>
        <begin position="1"/>
        <end position="87"/>
    </location>
</feature>
<feature type="region of interest" description="Disordered" evidence="2">
    <location>
        <begin position="1"/>
        <end position="21"/>
    </location>
</feature>
<keyword id="KW-0687">Ribonucleoprotein</keyword>
<keyword id="KW-0689">Ribosomal protein</keyword>
<name>RL27_BURP6</name>
<sequence>MAHKKAGGSSRNGRDSESKRLGVKVYGGQAINAGGIIVRQRGTRMHAGENVGMGKDHTLFALVDGHVKFTTKGAAKKHTVVVVPAAA</sequence>
<dbReference type="EMBL" id="CP000570">
    <property type="protein sequence ID" value="ABN83228.1"/>
    <property type="molecule type" value="Genomic_DNA"/>
</dbReference>
<dbReference type="RefSeq" id="WP_004194025.1">
    <property type="nucleotide sequence ID" value="NC_009074.1"/>
</dbReference>
<dbReference type="SMR" id="A3NDS9"/>
<dbReference type="GeneID" id="93061604"/>
<dbReference type="KEGG" id="bpd:BURPS668_3489"/>
<dbReference type="HOGENOM" id="CLU_095424_4_1_4"/>
<dbReference type="GO" id="GO:0022625">
    <property type="term" value="C:cytosolic large ribosomal subunit"/>
    <property type="evidence" value="ECO:0007669"/>
    <property type="project" value="TreeGrafter"/>
</dbReference>
<dbReference type="GO" id="GO:0003735">
    <property type="term" value="F:structural constituent of ribosome"/>
    <property type="evidence" value="ECO:0007669"/>
    <property type="project" value="InterPro"/>
</dbReference>
<dbReference type="GO" id="GO:0006412">
    <property type="term" value="P:translation"/>
    <property type="evidence" value="ECO:0007669"/>
    <property type="project" value="UniProtKB-UniRule"/>
</dbReference>
<dbReference type="FunFam" id="2.40.50.100:FF:000001">
    <property type="entry name" value="50S ribosomal protein L27"/>
    <property type="match status" value="1"/>
</dbReference>
<dbReference type="Gene3D" id="2.40.50.100">
    <property type="match status" value="1"/>
</dbReference>
<dbReference type="HAMAP" id="MF_00539">
    <property type="entry name" value="Ribosomal_bL27"/>
    <property type="match status" value="1"/>
</dbReference>
<dbReference type="InterPro" id="IPR001684">
    <property type="entry name" value="Ribosomal_bL27"/>
</dbReference>
<dbReference type="InterPro" id="IPR018261">
    <property type="entry name" value="Ribosomal_bL27_CS"/>
</dbReference>
<dbReference type="NCBIfam" id="TIGR00062">
    <property type="entry name" value="L27"/>
    <property type="match status" value="1"/>
</dbReference>
<dbReference type="PANTHER" id="PTHR15893:SF0">
    <property type="entry name" value="LARGE RIBOSOMAL SUBUNIT PROTEIN BL27M"/>
    <property type="match status" value="1"/>
</dbReference>
<dbReference type="PANTHER" id="PTHR15893">
    <property type="entry name" value="RIBOSOMAL PROTEIN L27"/>
    <property type="match status" value="1"/>
</dbReference>
<dbReference type="Pfam" id="PF01016">
    <property type="entry name" value="Ribosomal_L27"/>
    <property type="match status" value="1"/>
</dbReference>
<dbReference type="PRINTS" id="PR00063">
    <property type="entry name" value="RIBOSOMALL27"/>
</dbReference>
<dbReference type="SUPFAM" id="SSF110324">
    <property type="entry name" value="Ribosomal L27 protein-like"/>
    <property type="match status" value="1"/>
</dbReference>
<dbReference type="PROSITE" id="PS00831">
    <property type="entry name" value="RIBOSOMAL_L27"/>
    <property type="match status" value="1"/>
</dbReference>
<proteinExistence type="inferred from homology"/>
<gene>
    <name evidence="1" type="primary">rpmA</name>
    <name type="ordered locus">BURPS668_3489</name>
</gene>
<organism>
    <name type="scientific">Burkholderia pseudomallei (strain 668)</name>
    <dbReference type="NCBI Taxonomy" id="320373"/>
    <lineage>
        <taxon>Bacteria</taxon>
        <taxon>Pseudomonadati</taxon>
        <taxon>Pseudomonadota</taxon>
        <taxon>Betaproteobacteria</taxon>
        <taxon>Burkholderiales</taxon>
        <taxon>Burkholderiaceae</taxon>
        <taxon>Burkholderia</taxon>
        <taxon>pseudomallei group</taxon>
    </lineage>
</organism>
<accession>A3NDS9</accession>
<reference key="1">
    <citation type="journal article" date="2010" name="Genome Biol. Evol.">
        <title>Continuing evolution of Burkholderia mallei through genome reduction and large-scale rearrangements.</title>
        <authorList>
            <person name="Losada L."/>
            <person name="Ronning C.M."/>
            <person name="DeShazer D."/>
            <person name="Woods D."/>
            <person name="Fedorova N."/>
            <person name="Kim H.S."/>
            <person name="Shabalina S.A."/>
            <person name="Pearson T.R."/>
            <person name="Brinkac L."/>
            <person name="Tan P."/>
            <person name="Nandi T."/>
            <person name="Crabtree J."/>
            <person name="Badger J."/>
            <person name="Beckstrom-Sternberg S."/>
            <person name="Saqib M."/>
            <person name="Schutzer S.E."/>
            <person name="Keim P."/>
            <person name="Nierman W.C."/>
        </authorList>
    </citation>
    <scope>NUCLEOTIDE SEQUENCE [LARGE SCALE GENOMIC DNA]</scope>
    <source>
        <strain>668</strain>
    </source>
</reference>
<protein>
    <recommendedName>
        <fullName evidence="1">Large ribosomal subunit protein bL27</fullName>
    </recommendedName>
    <alternativeName>
        <fullName evidence="3">50S ribosomal protein L27</fullName>
    </alternativeName>
</protein>
<evidence type="ECO:0000255" key="1">
    <source>
        <dbReference type="HAMAP-Rule" id="MF_00539"/>
    </source>
</evidence>
<evidence type="ECO:0000256" key="2">
    <source>
        <dbReference type="SAM" id="MobiDB-lite"/>
    </source>
</evidence>
<evidence type="ECO:0000305" key="3"/>
<comment type="similarity">
    <text evidence="1">Belongs to the bacterial ribosomal protein bL27 family.</text>
</comment>